<reference key="1">
    <citation type="journal article" date="2002" name="Nature">
        <title>Complete genome sequence of the model actinomycete Streptomyces coelicolor A3(2).</title>
        <authorList>
            <person name="Bentley S.D."/>
            <person name="Chater K.F."/>
            <person name="Cerdeno-Tarraga A.-M."/>
            <person name="Challis G.L."/>
            <person name="Thomson N.R."/>
            <person name="James K.D."/>
            <person name="Harris D.E."/>
            <person name="Quail M.A."/>
            <person name="Kieser H."/>
            <person name="Harper D."/>
            <person name="Bateman A."/>
            <person name="Brown S."/>
            <person name="Chandra G."/>
            <person name="Chen C.W."/>
            <person name="Collins M."/>
            <person name="Cronin A."/>
            <person name="Fraser A."/>
            <person name="Goble A."/>
            <person name="Hidalgo J."/>
            <person name="Hornsby T."/>
            <person name="Howarth S."/>
            <person name="Huang C.-H."/>
            <person name="Kieser T."/>
            <person name="Larke L."/>
            <person name="Murphy L.D."/>
            <person name="Oliver K."/>
            <person name="O'Neil S."/>
            <person name="Rabbinowitsch E."/>
            <person name="Rajandream M.A."/>
            <person name="Rutherford K.M."/>
            <person name="Rutter S."/>
            <person name="Seeger K."/>
            <person name="Saunders D."/>
            <person name="Sharp S."/>
            <person name="Squares R."/>
            <person name="Squares S."/>
            <person name="Taylor K."/>
            <person name="Warren T."/>
            <person name="Wietzorrek A."/>
            <person name="Woodward J.R."/>
            <person name="Barrell B.G."/>
            <person name="Parkhill J."/>
            <person name="Hopwood D.A."/>
        </authorList>
    </citation>
    <scope>NUCLEOTIDE SEQUENCE [LARGE SCALE GENOMIC DNA]</scope>
    <source>
        <strain>ATCC BAA-471 / A3(2) / M145</strain>
    </source>
</reference>
<reference key="2">
    <citation type="journal article" date="2004" name="Nucleic Acids Res.">
        <title>Extending the classification of bacterial transcription factors beyond the helix-turn-helix motif as an alternative approach to discover new cis/trans relationships.</title>
        <authorList>
            <person name="Rigali S."/>
            <person name="Schlicht M."/>
            <person name="Hoskisson P."/>
            <person name="Nothaft H."/>
            <person name="Merzbacher M."/>
            <person name="Joris B."/>
            <person name="Titgemeyer F."/>
        </authorList>
    </citation>
    <scope>ROLE IN THE REGULATION OF THE PTS REGULON</scope>
    <source>
        <strain>ATCC BAA-471 / A3(2) / M145</strain>
    </source>
</reference>
<reference key="3">
    <citation type="journal article" date="2006" name="Mol. Microbiol.">
        <title>The sugar phosphotransferase system of Streptomyces coelicolor is regulated by the GntR-family regulator DasR and links N-acetylglucosamine metabolism to the control of development.</title>
        <authorList>
            <person name="Rigali S."/>
            <person name="Nothaft H."/>
            <person name="Noens E.E.E."/>
            <person name="Schlicht M."/>
            <person name="Colson S."/>
            <person name="Mueller M."/>
            <person name="Joris B."/>
            <person name="Koerten H.K."/>
            <person name="Hopwood D.A."/>
            <person name="Titgemeyer F."/>
            <person name="van Wezel G.P."/>
        </authorList>
    </citation>
    <scope>FUNCTION</scope>
    <scope>ACTIVITY REGULATION</scope>
    <scope>DISRUPTION PHENOTYPE</scope>
    <source>
        <strain>ATCC BAA-471 / A3(2) / M145</strain>
    </source>
</reference>
<reference key="4">
    <citation type="journal article" date="2007" name="Appl. Environ. Microbiol.">
        <title>The dasABC gene cluster, adjacent to dasR, encodes a novel ABC transporter for the uptake of N,N'-diacetylchitobiose in Streptomyces coelicolor A3(2).</title>
        <authorList>
            <person name="Saito A."/>
            <person name="Shinya T."/>
            <person name="Miyamoto K."/>
            <person name="Yokoyama T."/>
            <person name="Kaku H."/>
            <person name="Minami E."/>
            <person name="Shibuya N."/>
            <person name="Tsujibo H."/>
            <person name="Nagata Y."/>
            <person name="Ando A."/>
            <person name="Fujii T."/>
            <person name="Miyashita K."/>
        </authorList>
    </citation>
    <scope>FUNCTION IN REGULATION OF DASABC</scope>
    <scope>INDUCTION</scope>
    <source>
        <strain>ATCC BAA-471 / A3(2) / M145</strain>
    </source>
</reference>
<reference key="5">
    <citation type="journal article" date="2007" name="J. Mol. Microbiol. Biotechnol.">
        <title>Conserved cis-acting elements upstream of genes composing the chitinolytic system of streptomycetes are DasR-responsive elements.</title>
        <authorList>
            <person name="Colson S."/>
            <person name="Stephan J."/>
            <person name="Hertrich T."/>
            <person name="Saito A."/>
            <person name="van Wezel G.P."/>
            <person name="Titgemeyer F."/>
            <person name="Rigali S."/>
        </authorList>
    </citation>
    <scope>REGULATION OF THE CHITINOLYTIC SYSTEM</scope>
    <source>
        <strain>ATCC BAA-471 / A3(2) / M145</strain>
    </source>
</reference>
<reference key="6">
    <citation type="journal article" date="2018" name="Microbes Environ.">
        <title>NgcESco acts as a lower-affinity binding protein of an ABC transporter for the uptake of N,N'-diacetylchitobiose in Streptomyces coelicolor A3(2).</title>
        <authorList>
            <person name="Iinuma C."/>
            <person name="Saito A."/>
            <person name="Ohnuma T."/>
            <person name="Tenconi E."/>
            <person name="Rosu A."/>
            <person name="Colson S."/>
            <person name="Mizutani Y."/>
            <person name="Liu F."/>
            <person name="Swiatek-Polatynska M."/>
            <person name="van Wezel G.P."/>
            <person name="Rigali S."/>
            <person name="Fujii T."/>
            <person name="Miyashita K."/>
        </authorList>
    </citation>
    <scope>FUNCTION IN REGULATION OF NGCEFG</scope>
    <source>
        <strain>ATCC BAA-471 / A3(2) / M145</strain>
    </source>
</reference>
<sequence>MSTDVSSAENEGGATVRTARVPKYYRLKKHLLDMTRTQTPGTPVPPERTLAAEFDTSRTTVRQALQELVVEGRLERIQGKGTFVAKPKVSQALQLTSYTEDMRAQGLEPTSQLLDIGYITADDRLAGLLDITAGGRVLRIERLRMANGEPMAIETTHLSAKRFPALRRSLVKYTSLYTALAEVYDVHLAEAEETIETSLATPREAGLLGTDVGLPMLMLSRHSQDRTGQPVEWVRSVYRGDRYKFVARLKRPQD</sequence>
<proteinExistence type="evidence at protein level"/>
<gene>
    <name type="primary">dasR</name>
    <name type="ordered locus">SCO5231</name>
    <name type="ORF">SC7E4.28c</name>
</gene>
<comment type="function">
    <text evidence="2 3 4 5">Global regulator that is part of the nutrient-sensing system. In the absence of glucosamine 6-P (GlcN6P), represses the phosphotransferase system (PTS) specific for the uptake of N-acetylglucosamine (PTSNag), and genes involved in the metabolism of chitin, as well as several genes involved in development, thereby linking carbon availability to morphogenesis (PubMed:15247334, PubMed:16925557). Also regulates the expression of the ABC transporters DasABC and NgcEFG, which are involved in N,N'-diacetylchitobiose ((GlcNAc)2) uptake (PubMed:17351098, PubMed:30089751). Binds to the DNA consensus sequence 5'-ACTGGTCTAGACCACT-3' (PubMed:15247334, PubMed:16925557).</text>
</comment>
<comment type="activity regulation">
    <text evidence="3">Binding to the target genes is abolished by GlcN6P, a central molecule in N-acetylglucosamine metabolism.</text>
</comment>
<comment type="subcellular location">
    <subcellularLocation>
        <location evidence="6">Cytoplasm</location>
    </subcellularLocation>
</comment>
<comment type="induction">
    <text evidence="4">Induced by (GlcNAc)2 and (GlcNAc)3.</text>
</comment>
<comment type="disruption phenotype">
    <text evidence="3">Deletion of the gene results in a bald phenotype, mutant fails to produce aerial hyphae and spores on glucose-containing media. The mutant is arrested at an early stage of the developmental program.</text>
</comment>
<keyword id="KW-0002">3D-structure</keyword>
<keyword id="KW-0963">Cytoplasm</keyword>
<keyword id="KW-0238">DNA-binding</keyword>
<keyword id="KW-1185">Reference proteome</keyword>
<keyword id="KW-0678">Repressor</keyword>
<keyword id="KW-0804">Transcription</keyword>
<keyword id="KW-0805">Transcription regulation</keyword>
<organism>
    <name type="scientific">Streptomyces coelicolor (strain ATCC BAA-471 / A3(2) / M145)</name>
    <dbReference type="NCBI Taxonomy" id="100226"/>
    <lineage>
        <taxon>Bacteria</taxon>
        <taxon>Bacillati</taxon>
        <taxon>Actinomycetota</taxon>
        <taxon>Actinomycetes</taxon>
        <taxon>Kitasatosporales</taxon>
        <taxon>Streptomycetaceae</taxon>
        <taxon>Streptomyces</taxon>
        <taxon>Streptomyces albidoflavus group</taxon>
    </lineage>
</organism>
<dbReference type="EMBL" id="AL939123">
    <property type="protein sequence ID" value="CAB94616.1"/>
    <property type="molecule type" value="Genomic_DNA"/>
</dbReference>
<dbReference type="RefSeq" id="NP_629378.1">
    <property type="nucleotide sequence ID" value="NC_003888.3"/>
</dbReference>
<dbReference type="RefSeq" id="WP_003973740.1">
    <property type="nucleotide sequence ID" value="NZ_VNID01000008.1"/>
</dbReference>
<dbReference type="PDB" id="4ZS8">
    <property type="method" value="X-ray"/>
    <property type="resolution" value="2.60 A"/>
    <property type="chains" value="A/B=1-254"/>
</dbReference>
<dbReference type="PDB" id="4ZSB">
    <property type="method" value="X-ray"/>
    <property type="resolution" value="2.00 A"/>
    <property type="chains" value="A=89-254"/>
</dbReference>
<dbReference type="PDB" id="4ZSI">
    <property type="method" value="X-ray"/>
    <property type="resolution" value="1.65 A"/>
    <property type="chains" value="A/B=88-254"/>
</dbReference>
<dbReference type="PDB" id="4ZSK">
    <property type="method" value="X-ray"/>
    <property type="resolution" value="1.85 A"/>
    <property type="chains" value="A/B=88-254"/>
</dbReference>
<dbReference type="PDBsum" id="4ZS8"/>
<dbReference type="PDBsum" id="4ZSB"/>
<dbReference type="PDBsum" id="4ZSI"/>
<dbReference type="PDBsum" id="4ZSK"/>
<dbReference type="SMR" id="Q9K492"/>
<dbReference type="STRING" id="100226.gene:17762882"/>
<dbReference type="PaxDb" id="100226-SCO5231"/>
<dbReference type="KEGG" id="sco:SCO5231"/>
<dbReference type="PATRIC" id="fig|100226.15.peg.5314"/>
<dbReference type="eggNOG" id="COG2188">
    <property type="taxonomic scope" value="Bacteria"/>
</dbReference>
<dbReference type="HOGENOM" id="CLU_063236_2_3_11"/>
<dbReference type="InParanoid" id="Q9K492"/>
<dbReference type="OrthoDB" id="8584262at2"/>
<dbReference type="PhylomeDB" id="Q9K492"/>
<dbReference type="Proteomes" id="UP000001973">
    <property type="component" value="Chromosome"/>
</dbReference>
<dbReference type="GO" id="GO:0005737">
    <property type="term" value="C:cytoplasm"/>
    <property type="evidence" value="ECO:0007669"/>
    <property type="project" value="UniProtKB-SubCell"/>
</dbReference>
<dbReference type="GO" id="GO:0003677">
    <property type="term" value="F:DNA binding"/>
    <property type="evidence" value="ECO:0007669"/>
    <property type="project" value="UniProtKB-KW"/>
</dbReference>
<dbReference type="GO" id="GO:0003700">
    <property type="term" value="F:DNA-binding transcription factor activity"/>
    <property type="evidence" value="ECO:0007669"/>
    <property type="project" value="InterPro"/>
</dbReference>
<dbReference type="GO" id="GO:0045892">
    <property type="term" value="P:negative regulation of DNA-templated transcription"/>
    <property type="evidence" value="ECO:0000318"/>
    <property type="project" value="GO_Central"/>
</dbReference>
<dbReference type="CDD" id="cd07377">
    <property type="entry name" value="WHTH_GntR"/>
    <property type="match status" value="1"/>
</dbReference>
<dbReference type="FunFam" id="1.10.10.10:FF:000095">
    <property type="entry name" value="GntR family transcriptional regulator"/>
    <property type="match status" value="1"/>
</dbReference>
<dbReference type="FunFam" id="3.40.1410.10:FF:000001">
    <property type="entry name" value="GntR family transcriptional regulator"/>
    <property type="match status" value="1"/>
</dbReference>
<dbReference type="Gene3D" id="3.40.1410.10">
    <property type="entry name" value="Chorismate lyase-like"/>
    <property type="match status" value="1"/>
</dbReference>
<dbReference type="Gene3D" id="1.10.10.10">
    <property type="entry name" value="Winged helix-like DNA-binding domain superfamily/Winged helix DNA-binding domain"/>
    <property type="match status" value="1"/>
</dbReference>
<dbReference type="InterPro" id="IPR050679">
    <property type="entry name" value="Bact_HTH_transcr_reg"/>
</dbReference>
<dbReference type="InterPro" id="IPR028978">
    <property type="entry name" value="Chorismate_lyase_/UTRA_dom_sf"/>
</dbReference>
<dbReference type="InterPro" id="IPR000524">
    <property type="entry name" value="Tscrpt_reg_HTH_GntR"/>
</dbReference>
<dbReference type="InterPro" id="IPR011663">
    <property type="entry name" value="UTRA"/>
</dbReference>
<dbReference type="InterPro" id="IPR036388">
    <property type="entry name" value="WH-like_DNA-bd_sf"/>
</dbReference>
<dbReference type="InterPro" id="IPR036390">
    <property type="entry name" value="WH_DNA-bd_sf"/>
</dbReference>
<dbReference type="PANTHER" id="PTHR44846">
    <property type="entry name" value="MANNOSYL-D-GLYCERATE TRANSPORT/METABOLISM SYSTEM REPRESSOR MNGR-RELATED"/>
    <property type="match status" value="1"/>
</dbReference>
<dbReference type="PANTHER" id="PTHR44846:SF1">
    <property type="entry name" value="MANNOSYL-D-GLYCERATE TRANSPORT_METABOLISM SYSTEM REPRESSOR MNGR-RELATED"/>
    <property type="match status" value="1"/>
</dbReference>
<dbReference type="Pfam" id="PF00392">
    <property type="entry name" value="GntR"/>
    <property type="match status" value="1"/>
</dbReference>
<dbReference type="Pfam" id="PF07702">
    <property type="entry name" value="UTRA"/>
    <property type="match status" value="1"/>
</dbReference>
<dbReference type="PRINTS" id="PR00035">
    <property type="entry name" value="HTHGNTR"/>
</dbReference>
<dbReference type="SMART" id="SM00345">
    <property type="entry name" value="HTH_GNTR"/>
    <property type="match status" value="1"/>
</dbReference>
<dbReference type="SMART" id="SM00866">
    <property type="entry name" value="UTRA"/>
    <property type="match status" value="1"/>
</dbReference>
<dbReference type="SUPFAM" id="SSF64288">
    <property type="entry name" value="Chorismate lyase-like"/>
    <property type="match status" value="1"/>
</dbReference>
<dbReference type="SUPFAM" id="SSF46785">
    <property type="entry name" value="Winged helix' DNA-binding domain"/>
    <property type="match status" value="1"/>
</dbReference>
<dbReference type="PROSITE" id="PS50949">
    <property type="entry name" value="HTH_GNTR"/>
    <property type="match status" value="1"/>
</dbReference>
<protein>
    <recommendedName>
        <fullName>HTH-type transcriptional repressor DasR</fullName>
    </recommendedName>
</protein>
<name>DASR_STRCO</name>
<feature type="chain" id="PRO_0000281408" description="HTH-type transcriptional repressor DasR">
    <location>
        <begin position="1"/>
        <end position="254"/>
    </location>
</feature>
<feature type="domain" description="HTH gntR-type" evidence="1">
    <location>
        <begin position="17"/>
        <end position="87"/>
    </location>
</feature>
<feature type="DNA-binding region" description="H-T-H motif" evidence="1">
    <location>
        <begin position="47"/>
        <end position="66"/>
    </location>
</feature>
<feature type="helix" evidence="7">
    <location>
        <begin position="23"/>
        <end position="34"/>
    </location>
</feature>
<feature type="turn" evidence="7">
    <location>
        <begin position="35"/>
        <end position="37"/>
    </location>
</feature>
<feature type="helix" evidence="7">
    <location>
        <begin position="47"/>
        <end position="53"/>
    </location>
</feature>
<feature type="helix" evidence="7">
    <location>
        <begin position="58"/>
        <end position="70"/>
    </location>
</feature>
<feature type="strand" evidence="7">
    <location>
        <begin position="73"/>
        <end position="77"/>
    </location>
</feature>
<feature type="turn" evidence="7">
    <location>
        <begin position="78"/>
        <end position="80"/>
    </location>
</feature>
<feature type="strand" evidence="7">
    <location>
        <begin position="81"/>
        <end position="84"/>
    </location>
</feature>
<feature type="strand" evidence="8">
    <location>
        <begin position="89"/>
        <end position="92"/>
    </location>
</feature>
<feature type="helix" evidence="8">
    <location>
        <begin position="98"/>
        <end position="104"/>
    </location>
</feature>
<feature type="strand" evidence="8">
    <location>
        <begin position="109"/>
        <end position="120"/>
    </location>
</feature>
<feature type="helix" evidence="8">
    <location>
        <begin position="123"/>
        <end position="129"/>
    </location>
</feature>
<feature type="strand" evidence="8">
    <location>
        <begin position="136"/>
        <end position="146"/>
    </location>
</feature>
<feature type="strand" evidence="8">
    <location>
        <begin position="149"/>
        <end position="159"/>
    </location>
</feature>
<feature type="turn" evidence="8">
    <location>
        <begin position="160"/>
        <end position="162"/>
    </location>
</feature>
<feature type="helix" evidence="8">
    <location>
        <begin position="166"/>
        <end position="169"/>
    </location>
</feature>
<feature type="turn" evidence="8">
    <location>
        <begin position="170"/>
        <end position="172"/>
    </location>
</feature>
<feature type="helix" evidence="8">
    <location>
        <begin position="176"/>
        <end position="184"/>
    </location>
</feature>
<feature type="strand" evidence="8">
    <location>
        <begin position="188"/>
        <end position="199"/>
    </location>
</feature>
<feature type="helix" evidence="8">
    <location>
        <begin position="202"/>
        <end position="208"/>
    </location>
</feature>
<feature type="strand" evidence="8">
    <location>
        <begin position="214"/>
        <end position="225"/>
    </location>
</feature>
<feature type="strand" evidence="8">
    <location>
        <begin position="230"/>
        <end position="238"/>
    </location>
</feature>
<feature type="turn" evidence="8">
    <location>
        <begin position="240"/>
        <end position="242"/>
    </location>
</feature>
<feature type="strand" evidence="8">
    <location>
        <begin position="243"/>
        <end position="250"/>
    </location>
</feature>
<evidence type="ECO:0000255" key="1">
    <source>
        <dbReference type="PROSITE-ProRule" id="PRU00307"/>
    </source>
</evidence>
<evidence type="ECO:0000269" key="2">
    <source>
    </source>
</evidence>
<evidence type="ECO:0000269" key="3">
    <source>
    </source>
</evidence>
<evidence type="ECO:0000269" key="4">
    <source>
    </source>
</evidence>
<evidence type="ECO:0000269" key="5">
    <source>
    </source>
</evidence>
<evidence type="ECO:0000305" key="6"/>
<evidence type="ECO:0007829" key="7">
    <source>
        <dbReference type="PDB" id="4ZS8"/>
    </source>
</evidence>
<evidence type="ECO:0007829" key="8">
    <source>
        <dbReference type="PDB" id="4ZSI"/>
    </source>
</evidence>
<accession>Q9K492</accession>